<protein>
    <recommendedName>
        <fullName>NADH-ubiquinone oxidoreductase chain 4L</fullName>
        <ecNumber>7.1.1.2</ecNumber>
    </recommendedName>
    <alternativeName>
        <fullName>NADH dehydrogenase subunit 4L</fullName>
    </alternativeName>
</protein>
<geneLocation type="mitochondrion"/>
<reference key="1">
    <citation type="journal article" date="2004" name="Gene">
        <title>Marsupial relationships and a timeline for marsupial radiation in South Gondwana.</title>
        <authorList>
            <person name="Nilsson M.A."/>
            <person name="Arnason U."/>
            <person name="Spencer P.B.S."/>
            <person name="Janke A."/>
        </authorList>
    </citation>
    <scope>NUCLEOTIDE SEQUENCE [GENOMIC DNA]</scope>
    <source>
        <tissue>Liver</tissue>
    </source>
</reference>
<sequence>MTPLNINLTMAFFLALAGVLIYRSHLMSTLLCLEGMMLSLFILLSLLISHFHMLSSSMAPLILLVFSACEAGVGLALLVKMSSNYGNDYVQNLNLLQC</sequence>
<feature type="chain" id="PRO_0000275130" description="NADH-ubiquinone oxidoreductase chain 4L">
    <location>
        <begin position="1"/>
        <end position="98"/>
    </location>
</feature>
<feature type="transmembrane region" description="Helical" evidence="3">
    <location>
        <begin position="1"/>
        <end position="21"/>
    </location>
</feature>
<feature type="transmembrane region" description="Helical" evidence="3">
    <location>
        <begin position="28"/>
        <end position="48"/>
    </location>
</feature>
<feature type="transmembrane region" description="Helical" evidence="3">
    <location>
        <begin position="59"/>
        <end position="79"/>
    </location>
</feature>
<comment type="function">
    <text evidence="1">Core subunit of the mitochondrial membrane respiratory chain NADH dehydrogenase (Complex I) which catalyzes electron transfer from NADH through the respiratory chain, using ubiquinone as an electron acceptor. Part of the enzyme membrane arm which is embedded in the lipid bilayer and involved in proton translocation.</text>
</comment>
<comment type="catalytic activity">
    <reaction evidence="1">
        <text>a ubiquinone + NADH + 5 H(+)(in) = a ubiquinol + NAD(+) + 4 H(+)(out)</text>
        <dbReference type="Rhea" id="RHEA:29091"/>
        <dbReference type="Rhea" id="RHEA-COMP:9565"/>
        <dbReference type="Rhea" id="RHEA-COMP:9566"/>
        <dbReference type="ChEBI" id="CHEBI:15378"/>
        <dbReference type="ChEBI" id="CHEBI:16389"/>
        <dbReference type="ChEBI" id="CHEBI:17976"/>
        <dbReference type="ChEBI" id="CHEBI:57540"/>
        <dbReference type="ChEBI" id="CHEBI:57945"/>
        <dbReference type="EC" id="7.1.1.2"/>
    </reaction>
    <physiologicalReaction direction="left-to-right" evidence="1">
        <dbReference type="Rhea" id="RHEA:29092"/>
    </physiologicalReaction>
</comment>
<comment type="subunit">
    <text evidence="2">Core subunit of respiratory chain NADH dehydrogenase (Complex I) which is composed of 45 different subunits.</text>
</comment>
<comment type="subcellular location">
    <subcellularLocation>
        <location evidence="2">Mitochondrion inner membrane</location>
        <topology evidence="3">Multi-pass membrane protein</topology>
    </subcellularLocation>
</comment>
<comment type="similarity">
    <text evidence="4">Belongs to the complex I subunit 4L family.</text>
</comment>
<dbReference type="EC" id="7.1.1.2"/>
<dbReference type="EMBL" id="AJ639868">
    <property type="protein sequence ID" value="CAG26376.1"/>
    <property type="molecule type" value="Genomic_DNA"/>
</dbReference>
<dbReference type="RefSeq" id="YP_161203.1">
    <property type="nucleotide sequence ID" value="NC_006518.1"/>
</dbReference>
<dbReference type="SMR" id="Q5QS71"/>
<dbReference type="GeneID" id="3187142"/>
<dbReference type="CTD" id="4539"/>
<dbReference type="GO" id="GO:0005743">
    <property type="term" value="C:mitochondrial inner membrane"/>
    <property type="evidence" value="ECO:0000250"/>
    <property type="project" value="UniProtKB"/>
</dbReference>
<dbReference type="GO" id="GO:0045271">
    <property type="term" value="C:respiratory chain complex I"/>
    <property type="evidence" value="ECO:0000250"/>
    <property type="project" value="UniProtKB"/>
</dbReference>
<dbReference type="GO" id="GO:0008137">
    <property type="term" value="F:NADH dehydrogenase (ubiquinone) activity"/>
    <property type="evidence" value="ECO:0000250"/>
    <property type="project" value="UniProtKB"/>
</dbReference>
<dbReference type="GO" id="GO:0042773">
    <property type="term" value="P:ATP synthesis coupled electron transport"/>
    <property type="evidence" value="ECO:0007669"/>
    <property type="project" value="InterPro"/>
</dbReference>
<dbReference type="FunFam" id="1.10.287.3510:FF:000002">
    <property type="entry name" value="NADH-ubiquinone oxidoreductase chain 4L"/>
    <property type="match status" value="1"/>
</dbReference>
<dbReference type="Gene3D" id="1.10.287.3510">
    <property type="match status" value="1"/>
</dbReference>
<dbReference type="InterPro" id="IPR001133">
    <property type="entry name" value="NADH_UbQ_OxRdtase_chain4L/K"/>
</dbReference>
<dbReference type="InterPro" id="IPR039428">
    <property type="entry name" value="NUOK/Mnh_C1-like"/>
</dbReference>
<dbReference type="PANTHER" id="PTHR11434:SF0">
    <property type="entry name" value="NADH-UBIQUINONE OXIDOREDUCTASE CHAIN 4L"/>
    <property type="match status" value="1"/>
</dbReference>
<dbReference type="PANTHER" id="PTHR11434">
    <property type="entry name" value="NADH-UBIQUINONE OXIDOREDUCTASE SUBUNIT ND4L"/>
    <property type="match status" value="1"/>
</dbReference>
<dbReference type="Pfam" id="PF00420">
    <property type="entry name" value="Oxidored_q2"/>
    <property type="match status" value="1"/>
</dbReference>
<keyword id="KW-0249">Electron transport</keyword>
<keyword id="KW-0472">Membrane</keyword>
<keyword id="KW-0496">Mitochondrion</keyword>
<keyword id="KW-0999">Mitochondrion inner membrane</keyword>
<keyword id="KW-0520">NAD</keyword>
<keyword id="KW-0679">Respiratory chain</keyword>
<keyword id="KW-1278">Translocase</keyword>
<keyword id="KW-0812">Transmembrane</keyword>
<keyword id="KW-1133">Transmembrane helix</keyword>
<keyword id="KW-0813">Transport</keyword>
<keyword id="KW-0830">Ubiquinone</keyword>
<accession>Q5QS71</accession>
<proteinExistence type="inferred from homology"/>
<gene>
    <name type="primary">MT-ND4L</name>
    <name type="synonym">MTND4L</name>
    <name type="synonym">NADH4L</name>
    <name type="synonym">ND4L</name>
</gene>
<organism>
    <name type="scientific">Tarsipes rostratus</name>
    <name type="common">Honey possum</name>
    <dbReference type="NCBI Taxonomy" id="38632"/>
    <lineage>
        <taxon>Eukaryota</taxon>
        <taxon>Metazoa</taxon>
        <taxon>Chordata</taxon>
        <taxon>Craniata</taxon>
        <taxon>Vertebrata</taxon>
        <taxon>Euteleostomi</taxon>
        <taxon>Mammalia</taxon>
        <taxon>Metatheria</taxon>
        <taxon>Diprotodontia</taxon>
        <taxon>Tarsipedidae</taxon>
        <taxon>Tarsipes</taxon>
    </lineage>
</organism>
<evidence type="ECO:0000250" key="1">
    <source>
        <dbReference type="UniProtKB" id="P03901"/>
    </source>
</evidence>
<evidence type="ECO:0000250" key="2">
    <source>
        <dbReference type="UniProtKB" id="P03902"/>
    </source>
</evidence>
<evidence type="ECO:0000255" key="3"/>
<evidence type="ECO:0000305" key="4"/>
<name>NU4LM_TARRO</name>